<feature type="transit peptide" description="Chloroplast" evidence="2">
    <location>
        <begin position="1"/>
        <end position="52"/>
    </location>
</feature>
<feature type="chain" id="PRO_0000013314" description="Delta-aminolevulinic acid dehydratase 1, chloroplastic">
    <location>
        <begin position="53"/>
        <end position="430"/>
    </location>
</feature>
<feature type="region of interest" description="Disordered" evidence="3">
    <location>
        <begin position="82"/>
        <end position="101"/>
    </location>
</feature>
<feature type="compositionally biased region" description="Pro residues" evidence="3">
    <location>
        <begin position="82"/>
        <end position="91"/>
    </location>
</feature>
<feature type="active site" description="Schiff-base intermediate with substrate" evidence="1">
    <location>
        <position position="298"/>
    </location>
</feature>
<feature type="active site" description="Schiff-base intermediate with substrate" evidence="1">
    <location>
        <position position="351"/>
    </location>
</feature>
<feature type="binding site" evidence="1">
    <location>
        <position position="308"/>
    </location>
    <ligand>
        <name>5-aminolevulinate</name>
        <dbReference type="ChEBI" id="CHEBI:356416"/>
        <label>1</label>
    </ligand>
</feature>
<feature type="binding site" evidence="1">
    <location>
        <position position="320"/>
    </location>
    <ligand>
        <name>5-aminolevulinate</name>
        <dbReference type="ChEBI" id="CHEBI:356416"/>
        <label>1</label>
    </ligand>
</feature>
<feature type="binding site" evidence="1">
    <location>
        <position position="336"/>
    </location>
    <ligand>
        <name>Mg(2+)</name>
        <dbReference type="ChEBI" id="CHEBI:18420"/>
    </ligand>
</feature>
<feature type="binding site" evidence="1">
    <location>
        <position position="377"/>
    </location>
    <ligand>
        <name>5-aminolevulinate</name>
        <dbReference type="ChEBI" id="CHEBI:356416"/>
        <label>2</label>
    </ligand>
</feature>
<feature type="binding site" evidence="1">
    <location>
        <position position="416"/>
    </location>
    <ligand>
        <name>5-aminolevulinate</name>
        <dbReference type="ChEBI" id="CHEBI:356416"/>
        <label>2</label>
    </ligand>
</feature>
<sequence>MATTPIFNASCSFPSTRGIDCKSYIGLRSNVSKVSVASSRIATSQRRNLVVRASESGNGHAKKLGMSDAECEAAVAAGNVPEAPPVPPKPAAPVGTPIIKPLNLSRRPRRNRASPVTRAAFQETDISPANFVYPLFIHEGEEDTPIGAMPGCYRLGWRHGLVQEVAKARAVGVNSIVLFPKVPEALKNSTGDEAYNDNGLVPRTIRLLKDKYPDLIIYTDVALDPYSSDGHDGIVREDGVIMNDETVHQLCKQAVSQARAGADVVSPSDMMDGRVGAIRSALDAEGFQNVSIMSYTAKYASSFYGPFREALDSNPRFGDKKTYQMNPANYREALIEAREDEAEGADILLVKPGLPYLDIIRLLRDKSPLPIAAYQVSGEYSMIKAGGVLKMIDEEKVMMESLMCLRRAGADIILTYFALQAATCLCGEKR</sequence>
<proteinExistence type="evidence at transcript level"/>
<reference key="1">
    <citation type="journal article" date="2000" name="Nature">
        <title>Sequence and analysis of chromosome 1 of the plant Arabidopsis thaliana.</title>
        <authorList>
            <person name="Theologis A."/>
            <person name="Ecker J.R."/>
            <person name="Palm C.J."/>
            <person name="Federspiel N.A."/>
            <person name="Kaul S."/>
            <person name="White O."/>
            <person name="Alonso J."/>
            <person name="Altafi H."/>
            <person name="Araujo R."/>
            <person name="Bowman C.L."/>
            <person name="Brooks S.Y."/>
            <person name="Buehler E."/>
            <person name="Chan A."/>
            <person name="Chao Q."/>
            <person name="Chen H."/>
            <person name="Cheuk R.F."/>
            <person name="Chin C.W."/>
            <person name="Chung M.K."/>
            <person name="Conn L."/>
            <person name="Conway A.B."/>
            <person name="Conway A.R."/>
            <person name="Creasy T.H."/>
            <person name="Dewar K."/>
            <person name="Dunn P."/>
            <person name="Etgu P."/>
            <person name="Feldblyum T.V."/>
            <person name="Feng J.-D."/>
            <person name="Fong B."/>
            <person name="Fujii C.Y."/>
            <person name="Gill J.E."/>
            <person name="Goldsmith A.D."/>
            <person name="Haas B."/>
            <person name="Hansen N.F."/>
            <person name="Hughes B."/>
            <person name="Huizar L."/>
            <person name="Hunter J.L."/>
            <person name="Jenkins J."/>
            <person name="Johnson-Hopson C."/>
            <person name="Khan S."/>
            <person name="Khaykin E."/>
            <person name="Kim C.J."/>
            <person name="Koo H.L."/>
            <person name="Kremenetskaia I."/>
            <person name="Kurtz D.B."/>
            <person name="Kwan A."/>
            <person name="Lam B."/>
            <person name="Langin-Hooper S."/>
            <person name="Lee A."/>
            <person name="Lee J.M."/>
            <person name="Lenz C.A."/>
            <person name="Li J.H."/>
            <person name="Li Y.-P."/>
            <person name="Lin X."/>
            <person name="Liu S.X."/>
            <person name="Liu Z.A."/>
            <person name="Luros J.S."/>
            <person name="Maiti R."/>
            <person name="Marziali A."/>
            <person name="Militscher J."/>
            <person name="Miranda M."/>
            <person name="Nguyen M."/>
            <person name="Nierman W.C."/>
            <person name="Osborne B.I."/>
            <person name="Pai G."/>
            <person name="Peterson J."/>
            <person name="Pham P.K."/>
            <person name="Rizzo M."/>
            <person name="Rooney T."/>
            <person name="Rowley D."/>
            <person name="Sakano H."/>
            <person name="Salzberg S.L."/>
            <person name="Schwartz J.R."/>
            <person name="Shinn P."/>
            <person name="Southwick A.M."/>
            <person name="Sun H."/>
            <person name="Tallon L.J."/>
            <person name="Tambunga G."/>
            <person name="Toriumi M.J."/>
            <person name="Town C.D."/>
            <person name="Utterback T."/>
            <person name="Van Aken S."/>
            <person name="Vaysberg M."/>
            <person name="Vysotskaia V.S."/>
            <person name="Walker M."/>
            <person name="Wu D."/>
            <person name="Yu G."/>
            <person name="Fraser C.M."/>
            <person name="Venter J.C."/>
            <person name="Davis R.W."/>
        </authorList>
    </citation>
    <scope>NUCLEOTIDE SEQUENCE [LARGE SCALE GENOMIC DNA]</scope>
    <source>
        <strain>cv. Columbia</strain>
    </source>
</reference>
<reference key="2">
    <citation type="journal article" date="2017" name="Plant J.">
        <title>Araport11: a complete reannotation of the Arabidopsis thaliana reference genome.</title>
        <authorList>
            <person name="Cheng C.Y."/>
            <person name="Krishnakumar V."/>
            <person name="Chan A.P."/>
            <person name="Thibaud-Nissen F."/>
            <person name="Schobel S."/>
            <person name="Town C.D."/>
        </authorList>
    </citation>
    <scope>GENOME REANNOTATION</scope>
    <source>
        <strain>cv. Columbia</strain>
    </source>
</reference>
<reference key="3">
    <citation type="journal article" date="2003" name="Science">
        <title>Empirical analysis of transcriptional activity in the Arabidopsis genome.</title>
        <authorList>
            <person name="Yamada K."/>
            <person name="Lim J."/>
            <person name="Dale J.M."/>
            <person name="Chen H."/>
            <person name="Shinn P."/>
            <person name="Palm C.J."/>
            <person name="Southwick A.M."/>
            <person name="Wu H.C."/>
            <person name="Kim C.J."/>
            <person name="Nguyen M."/>
            <person name="Pham P.K."/>
            <person name="Cheuk R.F."/>
            <person name="Karlin-Newmann G."/>
            <person name="Liu S.X."/>
            <person name="Lam B."/>
            <person name="Sakano H."/>
            <person name="Wu T."/>
            <person name="Yu G."/>
            <person name="Miranda M."/>
            <person name="Quach H.L."/>
            <person name="Tripp M."/>
            <person name="Chang C.H."/>
            <person name="Lee J.M."/>
            <person name="Toriumi M.J."/>
            <person name="Chan M.M."/>
            <person name="Tang C.C."/>
            <person name="Onodera C.S."/>
            <person name="Deng J.M."/>
            <person name="Akiyama K."/>
            <person name="Ansari Y."/>
            <person name="Arakawa T."/>
            <person name="Banh J."/>
            <person name="Banno F."/>
            <person name="Bowser L."/>
            <person name="Brooks S.Y."/>
            <person name="Carninci P."/>
            <person name="Chao Q."/>
            <person name="Choy N."/>
            <person name="Enju A."/>
            <person name="Goldsmith A.D."/>
            <person name="Gurjal M."/>
            <person name="Hansen N.F."/>
            <person name="Hayashizaki Y."/>
            <person name="Johnson-Hopson C."/>
            <person name="Hsuan V.W."/>
            <person name="Iida K."/>
            <person name="Karnes M."/>
            <person name="Khan S."/>
            <person name="Koesema E."/>
            <person name="Ishida J."/>
            <person name="Jiang P.X."/>
            <person name="Jones T."/>
            <person name="Kawai J."/>
            <person name="Kamiya A."/>
            <person name="Meyers C."/>
            <person name="Nakajima M."/>
            <person name="Narusaka M."/>
            <person name="Seki M."/>
            <person name="Sakurai T."/>
            <person name="Satou M."/>
            <person name="Tamse R."/>
            <person name="Vaysberg M."/>
            <person name="Wallender E.K."/>
            <person name="Wong C."/>
            <person name="Yamamura Y."/>
            <person name="Yuan S."/>
            <person name="Shinozaki K."/>
            <person name="Davis R.W."/>
            <person name="Theologis A."/>
            <person name="Ecker J.R."/>
        </authorList>
    </citation>
    <scope>NUCLEOTIDE SEQUENCE [LARGE SCALE MRNA]</scope>
    <source>
        <strain>cv. Columbia</strain>
    </source>
</reference>
<reference key="4">
    <citation type="journal article" date="2012" name="Plant Cell">
        <title>Transposase-derived proteins FHY3/FAR1 interact with PHYTOCHROME-INTERACTING FACTOR1 to regulate chlorophyll biosynthesis by modulating HEMB1 during deetiolation in Arabidopsis.</title>
        <authorList>
            <person name="Tang W."/>
            <person name="Wang W."/>
            <person name="Chen D."/>
            <person name="Ji Q."/>
            <person name="Jing Y."/>
            <person name="Wang H."/>
            <person name="Lin R."/>
        </authorList>
    </citation>
    <scope>INDUCTION BY FHY3 AND FAR1</scope>
    <scope>DISRUPTION PHENOTYPE</scope>
    <scope>TISSUE SPECIFICITY</scope>
</reference>
<accession>Q9SFH9</accession>
<gene>
    <name type="primary">HEMB1</name>
    <name type="ordered locus">At1g69740</name>
    <name type="ORF">T6C23.6</name>
</gene>
<dbReference type="EC" id="4.2.1.24"/>
<dbReference type="EMBL" id="AC013289">
    <property type="protein sequence ID" value="AAG52549.1"/>
    <property type="molecule type" value="Genomic_DNA"/>
</dbReference>
<dbReference type="EMBL" id="CP002684">
    <property type="protein sequence ID" value="AEE34969.1"/>
    <property type="molecule type" value="Genomic_DNA"/>
</dbReference>
<dbReference type="EMBL" id="CP002684">
    <property type="protein sequence ID" value="AEE34970.1"/>
    <property type="molecule type" value="Genomic_DNA"/>
</dbReference>
<dbReference type="EMBL" id="CP002684">
    <property type="protein sequence ID" value="ANM58523.1"/>
    <property type="molecule type" value="Genomic_DNA"/>
</dbReference>
<dbReference type="EMBL" id="AF327428">
    <property type="protein sequence ID" value="AAG42018.1"/>
    <property type="molecule type" value="mRNA"/>
</dbReference>
<dbReference type="EMBL" id="AF361803">
    <property type="protein sequence ID" value="AAK32816.1"/>
    <property type="molecule type" value="mRNA"/>
</dbReference>
<dbReference type="EMBL" id="AY059154">
    <property type="protein sequence ID" value="AAL15379.1"/>
    <property type="molecule type" value="mRNA"/>
</dbReference>
<dbReference type="EMBL" id="AY081254">
    <property type="protein sequence ID" value="AAL91143.1"/>
    <property type="molecule type" value="mRNA"/>
</dbReference>
<dbReference type="EMBL" id="AY113941">
    <property type="protein sequence ID" value="AAM44989.1"/>
    <property type="molecule type" value="mRNA"/>
</dbReference>
<dbReference type="EMBL" id="AY120705">
    <property type="protein sequence ID" value="AAM53263.1"/>
    <property type="molecule type" value="mRNA"/>
</dbReference>
<dbReference type="EMBL" id="AY128711">
    <property type="protein sequence ID" value="AAM91111.1"/>
    <property type="molecule type" value="mRNA"/>
</dbReference>
<dbReference type="PIR" id="D96719">
    <property type="entry name" value="D96719"/>
</dbReference>
<dbReference type="RefSeq" id="NP_001077800.1">
    <property type="nucleotide sequence ID" value="NM_001084331.3"/>
</dbReference>
<dbReference type="RefSeq" id="NP_001320950.1">
    <property type="nucleotide sequence ID" value="NM_001334421.1"/>
</dbReference>
<dbReference type="RefSeq" id="NP_177132.1">
    <property type="nucleotide sequence ID" value="NM_105642.4"/>
</dbReference>
<dbReference type="SMR" id="Q9SFH9"/>
<dbReference type="BioGRID" id="28531">
    <property type="interactions" value="2"/>
</dbReference>
<dbReference type="FunCoup" id="Q9SFH9">
    <property type="interactions" value="3207"/>
</dbReference>
<dbReference type="STRING" id="3702.Q9SFH9"/>
<dbReference type="iPTMnet" id="Q9SFH9"/>
<dbReference type="PaxDb" id="3702-AT1G69740.1"/>
<dbReference type="ProteomicsDB" id="228741"/>
<dbReference type="EnsemblPlants" id="AT1G69740.1">
    <property type="protein sequence ID" value="AT1G69740.1"/>
    <property type="gene ID" value="AT1G69740"/>
</dbReference>
<dbReference type="EnsemblPlants" id="AT1G69740.2">
    <property type="protein sequence ID" value="AT1G69740.2"/>
    <property type="gene ID" value="AT1G69740"/>
</dbReference>
<dbReference type="EnsemblPlants" id="AT1G69740.3">
    <property type="protein sequence ID" value="AT1G69740.3"/>
    <property type="gene ID" value="AT1G69740"/>
</dbReference>
<dbReference type="GeneID" id="843310"/>
<dbReference type="Gramene" id="AT1G69740.1">
    <property type="protein sequence ID" value="AT1G69740.1"/>
    <property type="gene ID" value="AT1G69740"/>
</dbReference>
<dbReference type="Gramene" id="AT1G69740.2">
    <property type="protein sequence ID" value="AT1G69740.2"/>
    <property type="gene ID" value="AT1G69740"/>
</dbReference>
<dbReference type="Gramene" id="AT1G69740.3">
    <property type="protein sequence ID" value="AT1G69740.3"/>
    <property type="gene ID" value="AT1G69740"/>
</dbReference>
<dbReference type="KEGG" id="ath:AT1G69740"/>
<dbReference type="Araport" id="AT1G69740"/>
<dbReference type="TAIR" id="AT1G69740">
    <property type="gene designation" value="HEMB1"/>
</dbReference>
<dbReference type="eggNOG" id="KOG2794">
    <property type="taxonomic scope" value="Eukaryota"/>
</dbReference>
<dbReference type="HOGENOM" id="CLU_035731_1_0_1"/>
<dbReference type="InParanoid" id="Q9SFH9"/>
<dbReference type="OMA" id="YQMDYAN"/>
<dbReference type="OrthoDB" id="1530at2759"/>
<dbReference type="PhylomeDB" id="Q9SFH9"/>
<dbReference type="UniPathway" id="UPA00251">
    <property type="reaction ID" value="UER00318"/>
</dbReference>
<dbReference type="UniPathway" id="UPA00668"/>
<dbReference type="CD-CODE" id="4299E36E">
    <property type="entry name" value="Nucleolus"/>
</dbReference>
<dbReference type="PRO" id="PR:Q9SFH9"/>
<dbReference type="Proteomes" id="UP000006548">
    <property type="component" value="Chromosome 1"/>
</dbReference>
<dbReference type="ExpressionAtlas" id="Q9SFH9">
    <property type="expression patterns" value="baseline and differential"/>
</dbReference>
<dbReference type="GO" id="GO:0009507">
    <property type="term" value="C:chloroplast"/>
    <property type="evidence" value="ECO:0007005"/>
    <property type="project" value="TAIR"/>
</dbReference>
<dbReference type="GO" id="GO:0009570">
    <property type="term" value="C:chloroplast stroma"/>
    <property type="evidence" value="ECO:0007005"/>
    <property type="project" value="TAIR"/>
</dbReference>
<dbReference type="GO" id="GO:0005739">
    <property type="term" value="C:mitochondrion"/>
    <property type="evidence" value="ECO:0007005"/>
    <property type="project" value="TAIR"/>
</dbReference>
<dbReference type="GO" id="GO:0046872">
    <property type="term" value="F:metal ion binding"/>
    <property type="evidence" value="ECO:0007669"/>
    <property type="project" value="UniProtKB-KW"/>
</dbReference>
<dbReference type="GO" id="GO:0004655">
    <property type="term" value="F:porphobilinogen synthase activity"/>
    <property type="evidence" value="ECO:0007669"/>
    <property type="project" value="UniProtKB-EC"/>
</dbReference>
<dbReference type="GO" id="GO:0015995">
    <property type="term" value="P:chlorophyll biosynthetic process"/>
    <property type="evidence" value="ECO:0007669"/>
    <property type="project" value="UniProtKB-UniPathway"/>
</dbReference>
<dbReference type="GO" id="GO:0006779">
    <property type="term" value="P:porphyrin-containing compound biosynthetic process"/>
    <property type="evidence" value="ECO:0000304"/>
    <property type="project" value="TAIR"/>
</dbReference>
<dbReference type="GO" id="GO:0006782">
    <property type="term" value="P:protoporphyrinogen IX biosynthetic process"/>
    <property type="evidence" value="ECO:0007669"/>
    <property type="project" value="UniProtKB-UniPathway"/>
</dbReference>
<dbReference type="CDD" id="cd04823">
    <property type="entry name" value="ALAD_PBGS_aspartate_rich"/>
    <property type="match status" value="1"/>
</dbReference>
<dbReference type="FunFam" id="3.20.20.70:FF:000101">
    <property type="entry name" value="Delta-aminolevulinic acid dehydratase"/>
    <property type="match status" value="1"/>
</dbReference>
<dbReference type="Gene3D" id="3.20.20.70">
    <property type="entry name" value="Aldolase class I"/>
    <property type="match status" value="1"/>
</dbReference>
<dbReference type="InterPro" id="IPR001731">
    <property type="entry name" value="ALAD"/>
</dbReference>
<dbReference type="InterPro" id="IPR030656">
    <property type="entry name" value="ALAD_AS"/>
</dbReference>
<dbReference type="InterPro" id="IPR013785">
    <property type="entry name" value="Aldolase_TIM"/>
</dbReference>
<dbReference type="NCBIfam" id="NF006762">
    <property type="entry name" value="PRK09283.1"/>
    <property type="match status" value="1"/>
</dbReference>
<dbReference type="PANTHER" id="PTHR11458">
    <property type="entry name" value="DELTA-AMINOLEVULINIC ACID DEHYDRATASE"/>
    <property type="match status" value="1"/>
</dbReference>
<dbReference type="PANTHER" id="PTHR11458:SF0">
    <property type="entry name" value="DELTA-AMINOLEVULINIC ACID DEHYDRATASE"/>
    <property type="match status" value="1"/>
</dbReference>
<dbReference type="Pfam" id="PF00490">
    <property type="entry name" value="ALAD"/>
    <property type="match status" value="1"/>
</dbReference>
<dbReference type="PRINTS" id="PR00144">
    <property type="entry name" value="DALDHYDRTASE"/>
</dbReference>
<dbReference type="SMART" id="SM01004">
    <property type="entry name" value="ALAD"/>
    <property type="match status" value="1"/>
</dbReference>
<dbReference type="SUPFAM" id="SSF51569">
    <property type="entry name" value="Aldolase"/>
    <property type="match status" value="1"/>
</dbReference>
<dbReference type="PROSITE" id="PS00169">
    <property type="entry name" value="D_ALA_DEHYDRATASE"/>
    <property type="match status" value="1"/>
</dbReference>
<keyword id="KW-0021">Allosteric enzyme</keyword>
<keyword id="KW-0149">Chlorophyll biosynthesis</keyword>
<keyword id="KW-0150">Chloroplast</keyword>
<keyword id="KW-0350">Heme biosynthesis</keyword>
<keyword id="KW-0456">Lyase</keyword>
<keyword id="KW-0460">Magnesium</keyword>
<keyword id="KW-0479">Metal-binding</keyword>
<keyword id="KW-0934">Plastid</keyword>
<keyword id="KW-0627">Porphyrin biosynthesis</keyword>
<keyword id="KW-1185">Reference proteome</keyword>
<keyword id="KW-0809">Transit peptide</keyword>
<comment type="function">
    <text evidence="1">Catalyzes an early step in the biosynthesis of tetrapyrroles. Binds two molecules of 5-aminolevulinate per subunit, each at a distinct site, and catalyzes their condensation to form porphobilinogen (By similarity).</text>
</comment>
<comment type="catalytic activity">
    <reaction>
        <text>2 5-aminolevulinate = porphobilinogen + 2 H2O + H(+)</text>
        <dbReference type="Rhea" id="RHEA:24064"/>
        <dbReference type="ChEBI" id="CHEBI:15377"/>
        <dbReference type="ChEBI" id="CHEBI:15378"/>
        <dbReference type="ChEBI" id="CHEBI:58126"/>
        <dbReference type="ChEBI" id="CHEBI:356416"/>
        <dbReference type="EC" id="4.2.1.24"/>
    </reaction>
</comment>
<comment type="cofactor">
    <cofactor evidence="1">
        <name>Mg(2+)</name>
        <dbReference type="ChEBI" id="CHEBI:18420"/>
    </cofactor>
    <text evidence="1">Binds 2 magnesium ions per monomer. The first magnesium ion is required for catalysis. The second functions as allosteric activator.</text>
</comment>
<comment type="pathway">
    <text>Porphyrin-containing compound metabolism; protoporphyrin-IX biosynthesis; coproporphyrinogen-III from 5-aminolevulinate: step 1/4.</text>
</comment>
<comment type="pathway">
    <text>Porphyrin-containing compound metabolism; chlorophyll biosynthesis.</text>
</comment>
<comment type="subunit">
    <text evidence="1">Homooctamer.</text>
</comment>
<comment type="subcellular location">
    <subcellularLocation>
        <location evidence="1">Plastid</location>
        <location evidence="1">Chloroplast</location>
    </subcellularLocation>
</comment>
<comment type="tissue specificity">
    <text evidence="4">Highly expressed in cotyledons during dark-to-light transition.</text>
</comment>
<comment type="induction">
    <text evidence="4">Up-regulated by the transcription factors FAR1 and FHY3.</text>
</comment>
<comment type="disruption phenotype">
    <text evidence="4">Embryo lethal when homozygous. Impaired plant growth and development.</text>
</comment>
<comment type="similarity">
    <text evidence="5">Belongs to the ALAD family.</text>
</comment>
<organism>
    <name type="scientific">Arabidopsis thaliana</name>
    <name type="common">Mouse-ear cress</name>
    <dbReference type="NCBI Taxonomy" id="3702"/>
    <lineage>
        <taxon>Eukaryota</taxon>
        <taxon>Viridiplantae</taxon>
        <taxon>Streptophyta</taxon>
        <taxon>Embryophyta</taxon>
        <taxon>Tracheophyta</taxon>
        <taxon>Spermatophyta</taxon>
        <taxon>Magnoliopsida</taxon>
        <taxon>eudicotyledons</taxon>
        <taxon>Gunneridae</taxon>
        <taxon>Pentapetalae</taxon>
        <taxon>rosids</taxon>
        <taxon>malvids</taxon>
        <taxon>Brassicales</taxon>
        <taxon>Brassicaceae</taxon>
        <taxon>Camelineae</taxon>
        <taxon>Arabidopsis</taxon>
    </lineage>
</organism>
<name>HEM21_ARATH</name>
<protein>
    <recommendedName>
        <fullName>Delta-aminolevulinic acid dehydratase 1, chloroplastic</fullName>
        <shortName>ALADH1</shortName>
        <ecNumber>4.2.1.24</ecNumber>
    </recommendedName>
    <alternativeName>
        <fullName>Porphobilinogen synthase</fullName>
    </alternativeName>
</protein>
<evidence type="ECO:0000250" key="1"/>
<evidence type="ECO:0000255" key="2"/>
<evidence type="ECO:0000256" key="3">
    <source>
        <dbReference type="SAM" id="MobiDB-lite"/>
    </source>
</evidence>
<evidence type="ECO:0000269" key="4">
    <source>
    </source>
</evidence>
<evidence type="ECO:0000305" key="5"/>